<comment type="function">
    <text evidence="1 15 16 17 18">Transcription factor required for the development of the heart and the spleen (PubMed:22560297). During heart development, acts as a transcriptional activator of NPPA/ANF in cooperation with GATA4 (By similarity). May cooperate with TBX2 to negatively modulate expression of NPPA/ANF in the atrioventricular canal (By similarity). Binds to the core DNA motif of NPPA promoter (PubMed:22849347, PubMed:26926761). Together with PBX1, required for spleen development through a mechanism that involves CDKN2B repression (PubMed:22560297). Positively regulates transcription of genes such as COL3A1 and MMP2, resulting in increased pulmonary endothelial fibrosis in response to hypoxia (PubMed:29899023).</text>
</comment>
<comment type="subunit">
    <text evidence="1 16 17 18">Homodimer (via the homeobox); binds DNA as homodimer (PubMed:22849347). Interacts (via the homeobox) with TBX5 (via the T-box); this complex binds DNA (PubMed:26926761). Interacts with HIPK1 and HIPK2, but not HIPK3. Interacts with the C-terminal zinc finger of GATA4 through its homeobox domain. Also interacts with JARID2 which represses its ability to activate transcription of ANF. Interacts with FBLIM1. Interacts with TBX18 (By similarity). Interacts with histone methyltransferase NSD2 (via HMG box) (By similarity). Interacts with NEDD9 (PubMed:29899023). Interacts with TBX1 (By similarity).</text>
</comment>
<comment type="interaction">
    <interactant intactId="EBI-936601">
        <id>P52952</id>
    </interactant>
    <interactant intactId="EBI-7049352">
        <id>P43694</id>
        <label>GATA4</label>
    </interactant>
    <organismsDiffer>false</organismsDiffer>
    <experiments>2</experiments>
</comment>
<comment type="interaction">
    <interactant intactId="EBI-936601">
        <id>P52952</id>
    </interactant>
    <interactant intactId="EBI-10261141">
        <id>Q8IUC2</id>
        <label>KRTAP8-1</label>
    </interactant>
    <organismsDiffer>false</organismsDiffer>
    <experiments>3</experiments>
</comment>
<comment type="interaction">
    <interactant intactId="EBI-936601">
        <id>P52952</id>
    </interactant>
    <interactant intactId="EBI-740343">
        <id>Q93062-3</id>
        <label>RBPMS</label>
    </interactant>
    <organismsDiffer>false</organismsDiffer>
    <experiments>3</experiments>
</comment>
<comment type="interaction">
    <interactant intactId="EBI-936601">
        <id>P52952</id>
    </interactant>
    <interactant intactId="EBI-12825957">
        <id>O15266-2</id>
        <label>SHOX</label>
    </interactant>
    <organismsDiffer>false</organismsDiffer>
    <experiments>3</experiments>
</comment>
<comment type="interaction">
    <interactant intactId="EBI-936601">
        <id>P52952</id>
    </interactant>
    <interactant intactId="EBI-304423">
        <id>Q99593-1</id>
        <label>TBX5</label>
    </interactant>
    <organismsDiffer>false</organismsDiffer>
    <experiments>6</experiments>
</comment>
<comment type="interaction">
    <interactant intactId="EBI-936601">
        <id>P52952</id>
    </interactant>
    <interactant intactId="EBI-6550597">
        <id>Q15642-2</id>
        <label>TRIP10</label>
    </interactant>
    <organismsDiffer>false</organismsDiffer>
    <experiments>3</experiments>
</comment>
<comment type="interaction">
    <interactant intactId="EBI-936601">
        <id>P52952</id>
    </interactant>
    <interactant intactId="EBI-8346526">
        <id>Q71FD7</id>
        <label>Fblim1</label>
    </interactant>
    <organismsDiffer>true</organismsDiffer>
    <experiments>4</experiments>
</comment>
<comment type="subcellular location">
    <subcellularLocation>
        <location evidence="18">Nucleus</location>
    </subcellularLocation>
</comment>
<comment type="alternative products">
    <event type="alternative splicing"/>
    <isoform>
        <id>P52952-1</id>
        <name>1</name>
        <sequence type="displayed"/>
    </isoform>
    <isoform>
        <id>P52952-2</id>
        <name>2</name>
        <sequence type="described" ref="VSP_043492 VSP_043493"/>
    </isoform>
    <isoform>
        <id>P52952-3</id>
        <name>3</name>
        <sequence type="described" ref="VSP_045481 VSP_045482"/>
    </isoform>
</comment>
<comment type="tissue specificity">
    <text>Expressed only in the heart.</text>
</comment>
<comment type="developmental stage">
    <text evidence="14">Expressed at embryonic stages 10 to 11 in the nondifferentiated mesodermal cells at the venous and arterial poles, as well as cells of the dorsal coelomic wall and ruptured mesocardium (at protein level) (PubMed:21403123). Expressed by all myocardial cells at embryonic stages 10 to 11 (at protein level) (PubMed:21403123).</text>
</comment>
<comment type="domain">
    <text evidence="16">The homeobox domain binds to double-stranded DNA (PubMed:22849347).</text>
</comment>
<comment type="disease" evidence="3 5 7 8 19">
    <disease id="DI-00153">
        <name>Atrial septal defect 7, with or without atrioventricular conduction defects</name>
        <acronym>ASD7</acronym>
        <description>A congenital heart malformation characterized by incomplete closure of the wall between the atria resulting in blood flow from the left to the right atria, and atrioventricular conduction defects in some cases.</description>
        <dbReference type="MIM" id="108900"/>
    </disease>
    <text>The disease is caused by variants affecting the gene represented in this entry.</text>
</comment>
<comment type="disease" evidence="3 4 5 11">
    <disease id="DI-02362">
        <name>Tetralogy of Fallot</name>
        <acronym>TOF</acronym>
        <description>A congenital heart anomaly which consists of pulmonary stenosis, ventricular septal defect, dextroposition of the aorta (aorta is on the right side instead of the left) and hypertrophy of the right ventricle. In this condition, blood from both ventricles (oxygen-rich and oxygen-poor) is pumped into the body often causing cyanosis.</description>
        <dbReference type="MIM" id="187500"/>
    </disease>
    <text>The disease is caused by variants affecting the gene represented in this entry.</text>
</comment>
<comment type="disease" evidence="5 10">
    <disease id="DI-01424">
        <name>Conotruncal heart malformations</name>
        <acronym>CTHM</acronym>
        <description>A group of congenital heart defects involving the outflow tracts. Examples include truncus arteriosus communis, double-outlet right ventricle and transposition of great arteries. Truncus arteriosus communis is characterized by a single outflow tract instead of a separate aorta and pulmonary artery. In transposition of the great arteries, the aorta arises from the right ventricle and the pulmonary artery from the left ventricle. In double outlet of the right ventricle, both the pulmonary artery and aorta arise from the right ventricle.</description>
        <dbReference type="MIM" id="217095"/>
    </disease>
    <text>The disease is caused by variants affecting the gene represented in this entry.</text>
</comment>
<comment type="disease" evidence="9">
    <disease id="DI-01404">
        <name>Hypothyroidism, congenital, non-goitrous, 5</name>
        <acronym>CHNG5</acronym>
        <description>A non-autoimmune condition characterized by resistance to thyroid-stimulating hormone (TSH) leading to increased levels of plasma TSH and low levels of thyroid hormone. CHNG5 presents variable severity depending on the completeness of the defect. Most patients are euthyroid and asymptomatic, with a normal sized thyroid gland. Only a subset of patients develop hypothyroidism and present a hypoplastic thyroid gland.</description>
        <dbReference type="MIM" id="225250"/>
    </disease>
    <text>The disease is caused by variants affecting the gene represented in this entry.</text>
</comment>
<comment type="disease" evidence="12 13">
    <disease id="DI-03331">
        <name>Ventricular septal defect 3</name>
        <acronym>VSD3</acronym>
        <description>A common form of congenital cardiovascular anomaly that may occur alone or in combination with other cardiac malformations. It can affect any portion of the ventricular septum, resulting in abnormal communications between the two lower chambers of the heart. Classification is based on location of the communication, such as perimembranous, inlet, outlet (infundibular), central muscular, marginal muscular, or apical muscular defect. Large defects that go unrepaired may give rise to cardiac enlargement, congestive heart failure, pulmonary hypertension, Eisenmenger's syndrome, delayed fetal brain development, arrhythmias, and even sudden cardiac death.</description>
        <dbReference type="MIM" id="614432"/>
    </disease>
    <text>The disease is caused by variants affecting the gene represented in this entry.</text>
</comment>
<comment type="disease" evidence="5 8">
    <disease id="DI-03342">
        <name>Hypoplastic left heart syndrome 2</name>
        <acronym>HLHS2</acronym>
        <description>A syndrome due to defective development of the aorta proximal to the entrance of the ductus arteriosus, and hypoplasia of the left ventricle and mitral valve. As a result of the abnormal circulation, the ductus arteriosus and foramen ovale are patent and the right atrium, right ventricle, and pulmonary artery are enlarged.</description>
        <dbReference type="MIM" id="614435"/>
    </disease>
    <text>The disease is caused by variants affecting the gene represented in this entry.</text>
</comment>
<comment type="similarity">
    <text evidence="21">Belongs to the NK-2 homeobox family.</text>
</comment>
<comment type="online information" name="Atlas of Genetics and Cytogenetics in Oncology and Haematology">
    <link uri="https://atlasgeneticsoncology.org/gene/42958/NKX25"/>
</comment>
<sequence length="324" mass="34918">MFPSPALTPTPFSVKDILNLEQQQRSLAAAGELSARLEATLAPSSCMLAAFKPEAYAGPEAAAPGLPELRAELGRAPSPAKCASAFPAAPAFYPRAYSDPDPAKDPRAEKKELCALQKAVELEKTEADNAERPRARRRRKPRVLFSQAQVYELERRFKQQRYLSAPERDQLASVLKLTSTQVKIWFQNRRYKCKRQRQDQTLELVGLPPPPPPPARRIAVPVLVRDGKPCLGDSAPYAPAYGVGLNPYGYNAYPAYPGYGGAACSPGYSCTAAYPAGPSPAQPATAAANNNFVNFGVGDLNAVQSPGIPQSNSGVSTLHGIRAW</sequence>
<evidence type="ECO:0000250" key="1">
    <source>
        <dbReference type="UniProtKB" id="P42582"/>
    </source>
</evidence>
<evidence type="ECO:0000255" key="2">
    <source>
        <dbReference type="PROSITE-ProRule" id="PRU00108"/>
    </source>
</evidence>
<evidence type="ECO:0000269" key="3">
    <source>
    </source>
</evidence>
<evidence type="ECO:0000269" key="4">
    <source>
    </source>
</evidence>
<evidence type="ECO:0000269" key="5">
    <source>
    </source>
</evidence>
<evidence type="ECO:0000269" key="6">
    <source>
    </source>
</evidence>
<evidence type="ECO:0000269" key="7">
    <source>
    </source>
</evidence>
<evidence type="ECO:0000269" key="8">
    <source>
    </source>
</evidence>
<evidence type="ECO:0000269" key="9">
    <source>
    </source>
</evidence>
<evidence type="ECO:0000269" key="10">
    <source>
    </source>
</evidence>
<evidence type="ECO:0000269" key="11">
    <source>
    </source>
</evidence>
<evidence type="ECO:0000269" key="12">
    <source>
    </source>
</evidence>
<evidence type="ECO:0000269" key="13">
    <source>
    </source>
</evidence>
<evidence type="ECO:0000269" key="14">
    <source>
    </source>
</evidence>
<evidence type="ECO:0000269" key="15">
    <source>
    </source>
</evidence>
<evidence type="ECO:0000269" key="16">
    <source>
    </source>
</evidence>
<evidence type="ECO:0000269" key="17">
    <source>
    </source>
</evidence>
<evidence type="ECO:0000269" key="18">
    <source>
    </source>
</evidence>
<evidence type="ECO:0000269" key="19">
    <source>
    </source>
</evidence>
<evidence type="ECO:0000303" key="20">
    <source>
    </source>
</evidence>
<evidence type="ECO:0000305" key="21"/>
<evidence type="ECO:0007829" key="22">
    <source>
        <dbReference type="PDB" id="3RKQ"/>
    </source>
</evidence>
<gene>
    <name type="primary">NKX2-5</name>
    <name type="synonym">CSX</name>
    <name type="synonym">NKX2.5</name>
    <name type="synonym">NKX2E</name>
</gene>
<dbReference type="EMBL" id="U34962">
    <property type="protein sequence ID" value="AAC50470.1"/>
    <property type="molecule type" value="mRNA"/>
</dbReference>
<dbReference type="EMBL" id="AB021133">
    <property type="protein sequence ID" value="BAA35181.1"/>
    <property type="molecule type" value="mRNA"/>
</dbReference>
<dbReference type="EMBL" id="AK297844">
    <property type="protein sequence ID" value="BAG60178.1"/>
    <property type="molecule type" value="mRNA"/>
</dbReference>
<dbReference type="EMBL" id="AK290615">
    <property type="protein sequence ID" value="BAF83304.1"/>
    <property type="molecule type" value="mRNA"/>
</dbReference>
<dbReference type="EMBL" id="AK309495">
    <property type="status" value="NOT_ANNOTATED_CDS"/>
    <property type="molecule type" value="mRNA"/>
</dbReference>
<dbReference type="EMBL" id="AC008412">
    <property type="status" value="NOT_ANNOTATED_CDS"/>
    <property type="molecule type" value="Genomic_DNA"/>
</dbReference>
<dbReference type="EMBL" id="CH471062">
    <property type="protein sequence ID" value="EAW61404.1"/>
    <property type="molecule type" value="Genomic_DNA"/>
</dbReference>
<dbReference type="EMBL" id="BC025711">
    <property type="protein sequence ID" value="AAH25711.1"/>
    <property type="molecule type" value="mRNA"/>
</dbReference>
<dbReference type="CCDS" id="CCDS4387.1">
    <molecule id="P52952-1"/>
</dbReference>
<dbReference type="CCDS" id="CCDS54949.1">
    <molecule id="P52952-2"/>
</dbReference>
<dbReference type="CCDS" id="CCDS54950.1">
    <molecule id="P52952-3"/>
</dbReference>
<dbReference type="RefSeq" id="NP_001159647.1">
    <molecule id="P52952-3"/>
    <property type="nucleotide sequence ID" value="NM_001166175.2"/>
</dbReference>
<dbReference type="RefSeq" id="NP_001159648.1">
    <molecule id="P52952-2"/>
    <property type="nucleotide sequence ID" value="NM_001166176.2"/>
</dbReference>
<dbReference type="RefSeq" id="NP_004378.1">
    <molecule id="P52952-1"/>
    <property type="nucleotide sequence ID" value="NM_004387.4"/>
</dbReference>
<dbReference type="PDB" id="3RKQ">
    <property type="method" value="X-ray"/>
    <property type="resolution" value="1.70 A"/>
    <property type="chains" value="A/B=138-192"/>
</dbReference>
<dbReference type="PDB" id="4S0H">
    <property type="method" value="X-ray"/>
    <property type="resolution" value="2.82 A"/>
    <property type="chains" value="B/F=142-192"/>
</dbReference>
<dbReference type="PDB" id="6WC2">
    <property type="method" value="X-ray"/>
    <property type="resolution" value="2.10 A"/>
    <property type="chains" value="M/N/O=137-197"/>
</dbReference>
<dbReference type="PDB" id="6WC5">
    <property type="method" value="X-ray"/>
    <property type="resolution" value="2.90 A"/>
    <property type="chains" value="I/N=140-196"/>
</dbReference>
<dbReference type="PDBsum" id="3RKQ"/>
<dbReference type="PDBsum" id="4S0H"/>
<dbReference type="PDBsum" id="6WC2"/>
<dbReference type="PDBsum" id="6WC5"/>
<dbReference type="SMR" id="P52952"/>
<dbReference type="BioGRID" id="107864">
    <property type="interactions" value="70"/>
</dbReference>
<dbReference type="ComplexPortal" id="CPX-61">
    <property type="entry name" value="NKX2-5 transcription factor complex"/>
</dbReference>
<dbReference type="FunCoup" id="P52952">
    <property type="interactions" value="319"/>
</dbReference>
<dbReference type="IntAct" id="P52952">
    <property type="interactions" value="61"/>
</dbReference>
<dbReference type="MINT" id="P52952"/>
<dbReference type="STRING" id="9606.ENSP00000327758"/>
<dbReference type="iPTMnet" id="P52952"/>
<dbReference type="PhosphoSitePlus" id="P52952"/>
<dbReference type="BioMuta" id="NKX2-5"/>
<dbReference type="DMDM" id="1708211"/>
<dbReference type="jPOST" id="P52952"/>
<dbReference type="MassIVE" id="P52952"/>
<dbReference type="PaxDb" id="9606-ENSP00000327758"/>
<dbReference type="PeptideAtlas" id="P52952"/>
<dbReference type="ProteomicsDB" id="19299"/>
<dbReference type="ProteomicsDB" id="56562">
    <molecule id="P52952-1"/>
</dbReference>
<dbReference type="ProteomicsDB" id="56563">
    <molecule id="P52952-2"/>
</dbReference>
<dbReference type="Pumba" id="P52952"/>
<dbReference type="Antibodypedia" id="28950">
    <property type="antibodies" value="507 antibodies from 40 providers"/>
</dbReference>
<dbReference type="DNASU" id="1482"/>
<dbReference type="Ensembl" id="ENST00000329198.5">
    <molecule id="P52952-1"/>
    <property type="protein sequence ID" value="ENSP00000327758.4"/>
    <property type="gene ID" value="ENSG00000183072.10"/>
</dbReference>
<dbReference type="Ensembl" id="ENST00000424406.2">
    <molecule id="P52952-3"/>
    <property type="protein sequence ID" value="ENSP00000395378.2"/>
    <property type="gene ID" value="ENSG00000183072.10"/>
</dbReference>
<dbReference type="Ensembl" id="ENST00000521848.1">
    <molecule id="P52952-2"/>
    <property type="protein sequence ID" value="ENSP00000427906.1"/>
    <property type="gene ID" value="ENSG00000183072.10"/>
</dbReference>
<dbReference type="GeneID" id="1482"/>
<dbReference type="KEGG" id="hsa:1482"/>
<dbReference type="MANE-Select" id="ENST00000329198.5">
    <property type="protein sequence ID" value="ENSP00000327758.4"/>
    <property type="RefSeq nucleotide sequence ID" value="NM_004387.4"/>
    <property type="RefSeq protein sequence ID" value="NP_004378.1"/>
</dbReference>
<dbReference type="UCSC" id="uc003mcm.3">
    <molecule id="P52952-1"/>
    <property type="organism name" value="human"/>
</dbReference>
<dbReference type="AGR" id="HGNC:2488"/>
<dbReference type="CTD" id="1482"/>
<dbReference type="DisGeNET" id="1482"/>
<dbReference type="GeneCards" id="NKX2-5"/>
<dbReference type="HGNC" id="HGNC:2488">
    <property type="gene designation" value="NKX2-5"/>
</dbReference>
<dbReference type="HPA" id="ENSG00000183072">
    <property type="expression patterns" value="Tissue enriched (heart)"/>
</dbReference>
<dbReference type="MalaCards" id="NKX2-5"/>
<dbReference type="MIM" id="108900">
    <property type="type" value="phenotype"/>
</dbReference>
<dbReference type="MIM" id="187500">
    <property type="type" value="phenotype"/>
</dbReference>
<dbReference type="MIM" id="217095">
    <property type="type" value="phenotype"/>
</dbReference>
<dbReference type="MIM" id="225250">
    <property type="type" value="phenotype"/>
</dbReference>
<dbReference type="MIM" id="600584">
    <property type="type" value="gene"/>
</dbReference>
<dbReference type="MIM" id="614432">
    <property type="type" value="phenotype"/>
</dbReference>
<dbReference type="MIM" id="614435">
    <property type="type" value="phenotype"/>
</dbReference>
<dbReference type="neXtProt" id="NX_P52952"/>
<dbReference type="OpenTargets" id="ENSG00000183072"/>
<dbReference type="Orphanet" id="95713">
    <property type="disease" value="Athyreosis"/>
</dbReference>
<dbReference type="Orphanet" id="99103">
    <property type="disease" value="Atrial septal defect, ostium secundum type"/>
</dbReference>
<dbReference type="Orphanet" id="1479">
    <property type="disease" value="Atrial septal defect-atrioventricular conduction defects syndrome"/>
</dbReference>
<dbReference type="Orphanet" id="1627">
    <property type="disease" value="Deletion 5q35 syndrome"/>
</dbReference>
<dbReference type="Orphanet" id="334">
    <property type="disease" value="Familial atrial fibrillation"/>
</dbReference>
<dbReference type="Orphanet" id="402075">
    <property type="disease" value="Familial bicuspid aortic valve"/>
</dbReference>
<dbReference type="Orphanet" id="101351">
    <property type="disease" value="Familial isolated congenital asplenia"/>
</dbReference>
<dbReference type="Orphanet" id="871">
    <property type="disease" value="Familial progressive cardiac conduction defect"/>
</dbReference>
<dbReference type="Orphanet" id="2248">
    <property type="disease" value="Hypoplastic left heart syndrome"/>
</dbReference>
<dbReference type="Orphanet" id="3303">
    <property type="disease" value="Tetralogy of Fallot"/>
</dbReference>
<dbReference type="Orphanet" id="95712">
    <property type="disease" value="Thyroid ectopia"/>
</dbReference>
<dbReference type="PharmGKB" id="PA24202"/>
<dbReference type="VEuPathDB" id="HostDB:ENSG00000183072"/>
<dbReference type="eggNOG" id="KOG0842">
    <property type="taxonomic scope" value="Eukaryota"/>
</dbReference>
<dbReference type="GeneTree" id="ENSGT00940000158996"/>
<dbReference type="HOGENOM" id="CLU_049543_0_0_1"/>
<dbReference type="InParanoid" id="P52952"/>
<dbReference type="OMA" id="CNASYSC"/>
<dbReference type="OrthoDB" id="6159439at2759"/>
<dbReference type="PAN-GO" id="P52952">
    <property type="GO annotations" value="5 GO annotations based on evolutionary models"/>
</dbReference>
<dbReference type="PhylomeDB" id="P52952"/>
<dbReference type="TreeFam" id="TF351204"/>
<dbReference type="PathwayCommons" id="P52952"/>
<dbReference type="Reactome" id="R-HSA-2032785">
    <property type="pathway name" value="YAP1- and WWTR1 (TAZ)-stimulated gene expression"/>
</dbReference>
<dbReference type="Reactome" id="R-HSA-5578768">
    <property type="pathway name" value="Physiological factors"/>
</dbReference>
<dbReference type="Reactome" id="R-HSA-9733709">
    <property type="pathway name" value="Cardiogenesis"/>
</dbReference>
<dbReference type="SignaLink" id="P52952"/>
<dbReference type="SIGNOR" id="P52952"/>
<dbReference type="BioGRID-ORCS" id="1482">
    <property type="hits" value="27 hits in 1150 CRISPR screens"/>
</dbReference>
<dbReference type="EvolutionaryTrace" id="P52952"/>
<dbReference type="GeneWiki" id="NKX2-5"/>
<dbReference type="GenomeRNAi" id="1482"/>
<dbReference type="Pharos" id="P52952">
    <property type="development level" value="Tbio"/>
</dbReference>
<dbReference type="PRO" id="PR:P52952"/>
<dbReference type="Proteomes" id="UP000005640">
    <property type="component" value="Chromosome 5"/>
</dbReference>
<dbReference type="RNAct" id="P52952">
    <property type="molecule type" value="protein"/>
</dbReference>
<dbReference type="Bgee" id="ENSG00000183072">
    <property type="expression patterns" value="Expressed in apex of heart and 82 other cell types or tissues"/>
</dbReference>
<dbReference type="ExpressionAtlas" id="P52952">
    <property type="expression patterns" value="baseline and differential"/>
</dbReference>
<dbReference type="GO" id="GO:0000785">
    <property type="term" value="C:chromatin"/>
    <property type="evidence" value="ECO:0000247"/>
    <property type="project" value="NTNU_SB"/>
</dbReference>
<dbReference type="GO" id="GO:0005829">
    <property type="term" value="C:cytosol"/>
    <property type="evidence" value="ECO:0000314"/>
    <property type="project" value="HPA"/>
</dbReference>
<dbReference type="GO" id="GO:1990664">
    <property type="term" value="C:Nkx-2.5 complex"/>
    <property type="evidence" value="ECO:0000353"/>
    <property type="project" value="ComplexPortal"/>
</dbReference>
<dbReference type="GO" id="GO:0005654">
    <property type="term" value="C:nucleoplasm"/>
    <property type="evidence" value="ECO:0000314"/>
    <property type="project" value="HPA"/>
</dbReference>
<dbReference type="GO" id="GO:0005634">
    <property type="term" value="C:nucleus"/>
    <property type="evidence" value="ECO:0000314"/>
    <property type="project" value="UniProtKB"/>
</dbReference>
<dbReference type="GO" id="GO:0032991">
    <property type="term" value="C:protein-containing complex"/>
    <property type="evidence" value="ECO:0000314"/>
    <property type="project" value="UniProtKB"/>
</dbReference>
<dbReference type="GO" id="GO:0032993">
    <property type="term" value="C:protein-DNA complex"/>
    <property type="evidence" value="ECO:0000314"/>
    <property type="project" value="UniProtKB"/>
</dbReference>
<dbReference type="GO" id="GO:0090575">
    <property type="term" value="C:RNA polymerase II transcription regulator complex"/>
    <property type="evidence" value="ECO:0000314"/>
    <property type="project" value="BHF-UCL"/>
</dbReference>
<dbReference type="GO" id="GO:0005667">
    <property type="term" value="C:transcription regulator complex"/>
    <property type="evidence" value="ECO:0000305"/>
    <property type="project" value="BHF-UCL"/>
</dbReference>
<dbReference type="GO" id="GO:0003682">
    <property type="term" value="F:chromatin binding"/>
    <property type="evidence" value="ECO:0000314"/>
    <property type="project" value="MGI"/>
</dbReference>
<dbReference type="GO" id="GO:0003677">
    <property type="term" value="F:DNA binding"/>
    <property type="evidence" value="ECO:0000314"/>
    <property type="project" value="BHF-UCL"/>
</dbReference>
<dbReference type="GO" id="GO:0001216">
    <property type="term" value="F:DNA-binding transcription activator activity"/>
    <property type="evidence" value="ECO:0000314"/>
    <property type="project" value="BHF-UCL"/>
</dbReference>
<dbReference type="GO" id="GO:0001228">
    <property type="term" value="F:DNA-binding transcription activator activity, RNA polymerase II-specific"/>
    <property type="evidence" value="ECO:0000314"/>
    <property type="project" value="BHF-UCL"/>
</dbReference>
<dbReference type="GO" id="GO:0003700">
    <property type="term" value="F:DNA-binding transcription factor activity"/>
    <property type="evidence" value="ECO:0000314"/>
    <property type="project" value="UniProtKB"/>
</dbReference>
<dbReference type="GO" id="GO:0000981">
    <property type="term" value="F:DNA-binding transcription factor activity, RNA polymerase II-specific"/>
    <property type="evidence" value="ECO:0000247"/>
    <property type="project" value="NTNU_SB"/>
</dbReference>
<dbReference type="GO" id="GO:0042803">
    <property type="term" value="F:protein homodimerization activity"/>
    <property type="evidence" value="ECO:0007669"/>
    <property type="project" value="Ensembl"/>
</dbReference>
<dbReference type="GO" id="GO:0000978">
    <property type="term" value="F:RNA polymerase II cis-regulatory region sequence-specific DNA binding"/>
    <property type="evidence" value="ECO:0000314"/>
    <property type="project" value="UniProtKB"/>
</dbReference>
<dbReference type="GO" id="GO:0061629">
    <property type="term" value="F:RNA polymerase II-specific DNA-binding transcription factor binding"/>
    <property type="evidence" value="ECO:0000353"/>
    <property type="project" value="BHF-UCL"/>
</dbReference>
<dbReference type="GO" id="GO:0043565">
    <property type="term" value="F:sequence-specific DNA binding"/>
    <property type="evidence" value="ECO:0000314"/>
    <property type="project" value="BHF-UCL"/>
</dbReference>
<dbReference type="GO" id="GO:1990837">
    <property type="term" value="F:sequence-specific double-stranded DNA binding"/>
    <property type="evidence" value="ECO:0000314"/>
    <property type="project" value="ARUK-UCL"/>
</dbReference>
<dbReference type="GO" id="GO:0000976">
    <property type="term" value="F:transcription cis-regulatory region binding"/>
    <property type="evidence" value="ECO:0000314"/>
    <property type="project" value="UniProtKB"/>
</dbReference>
<dbReference type="GO" id="GO:0007512">
    <property type="term" value="P:adult heart development"/>
    <property type="evidence" value="ECO:0000315"/>
    <property type="project" value="BHF-UCL"/>
</dbReference>
<dbReference type="GO" id="GO:0003180">
    <property type="term" value="P:aortic valve morphogenesis"/>
    <property type="evidence" value="ECO:0000304"/>
    <property type="project" value="BHF-UCL"/>
</dbReference>
<dbReference type="GO" id="GO:0003278">
    <property type="term" value="P:apoptotic process involved in heart morphogenesis"/>
    <property type="evidence" value="ECO:0007669"/>
    <property type="project" value="Ensembl"/>
</dbReference>
<dbReference type="GO" id="GO:0055014">
    <property type="term" value="P:atrial cardiac muscle cell development"/>
    <property type="evidence" value="ECO:0000250"/>
    <property type="project" value="BHF-UCL"/>
</dbReference>
<dbReference type="GO" id="GO:0003228">
    <property type="term" value="P:atrial cardiac muscle tissue development"/>
    <property type="evidence" value="ECO:0000250"/>
    <property type="project" value="BHF-UCL"/>
</dbReference>
<dbReference type="GO" id="GO:0060413">
    <property type="term" value="P:atrial septum morphogenesis"/>
    <property type="evidence" value="ECO:0000315"/>
    <property type="project" value="BHF-UCL"/>
</dbReference>
<dbReference type="GO" id="GO:0060928">
    <property type="term" value="P:atrioventricular node cell development"/>
    <property type="evidence" value="ECO:0007669"/>
    <property type="project" value="Ensembl"/>
</dbReference>
<dbReference type="GO" id="GO:0060929">
    <property type="term" value="P:atrioventricular node cell fate commitment"/>
    <property type="evidence" value="ECO:0007669"/>
    <property type="project" value="Ensembl"/>
</dbReference>
<dbReference type="GO" id="GO:0003162">
    <property type="term" value="P:atrioventricular node development"/>
    <property type="evidence" value="ECO:0000250"/>
    <property type="project" value="BHF-UCL"/>
</dbReference>
<dbReference type="GO" id="GO:0003166">
    <property type="term" value="P:bundle of His development"/>
    <property type="evidence" value="ECO:0000250"/>
    <property type="project" value="BHF-UCL"/>
</dbReference>
<dbReference type="GO" id="GO:0003161">
    <property type="term" value="P:cardiac conduction system development"/>
    <property type="evidence" value="ECO:0000315"/>
    <property type="project" value="MGI"/>
</dbReference>
<dbReference type="GO" id="GO:0055013">
    <property type="term" value="P:cardiac muscle cell development"/>
    <property type="evidence" value="ECO:0000250"/>
    <property type="project" value="BHF-UCL"/>
</dbReference>
<dbReference type="GO" id="GO:0060038">
    <property type="term" value="P:cardiac muscle cell proliferation"/>
    <property type="evidence" value="ECO:0007669"/>
    <property type="project" value="Ensembl"/>
</dbReference>
<dbReference type="GO" id="GO:0060048">
    <property type="term" value="P:cardiac muscle contraction"/>
    <property type="evidence" value="ECO:0007669"/>
    <property type="project" value="Ensembl"/>
</dbReference>
<dbReference type="GO" id="GO:0055008">
    <property type="term" value="P:cardiac muscle tissue morphogenesis"/>
    <property type="evidence" value="ECO:0000315"/>
    <property type="project" value="BHF-UCL"/>
</dbReference>
<dbReference type="GO" id="GO:0060411">
    <property type="term" value="P:cardiac septum morphogenesis"/>
    <property type="evidence" value="ECO:0000266"/>
    <property type="project" value="ComplexPortal"/>
</dbReference>
<dbReference type="GO" id="GO:0003211">
    <property type="term" value="P:cardiac ventricle formation"/>
    <property type="evidence" value="ECO:0007669"/>
    <property type="project" value="Ensembl"/>
</dbReference>
<dbReference type="GO" id="GO:0030154">
    <property type="term" value="P:cell differentiation"/>
    <property type="evidence" value="ECO:0000250"/>
    <property type="project" value="BHF-UCL"/>
</dbReference>
<dbReference type="GO" id="GO:0035050">
    <property type="term" value="P:embryonic heart tube development"/>
    <property type="evidence" value="ECO:0000250"/>
    <property type="project" value="BHF-UCL"/>
</dbReference>
<dbReference type="GO" id="GO:0060971">
    <property type="term" value="P:embryonic heart tube left/right pattern formation"/>
    <property type="evidence" value="ECO:0007669"/>
    <property type="project" value="Ensembl"/>
</dbReference>
<dbReference type="GO" id="GO:1904019">
    <property type="term" value="P:epithelial cell apoptotic process"/>
    <property type="evidence" value="ECO:0007669"/>
    <property type="project" value="Ensembl"/>
</dbReference>
<dbReference type="GO" id="GO:0030855">
    <property type="term" value="P:epithelial cell differentiation"/>
    <property type="evidence" value="ECO:0007669"/>
    <property type="project" value="Ensembl"/>
</dbReference>
<dbReference type="GO" id="GO:0050673">
    <property type="term" value="P:epithelial cell proliferation"/>
    <property type="evidence" value="ECO:0007669"/>
    <property type="project" value="Ensembl"/>
</dbReference>
<dbReference type="GO" id="GO:0007507">
    <property type="term" value="P:heart development"/>
    <property type="evidence" value="ECO:0000266"/>
    <property type="project" value="ComplexPortal"/>
</dbReference>
<dbReference type="GO" id="GO:0001947">
    <property type="term" value="P:heart looping"/>
    <property type="evidence" value="ECO:0000250"/>
    <property type="project" value="BHF-UCL"/>
</dbReference>
<dbReference type="GO" id="GO:0003007">
    <property type="term" value="P:heart morphogenesis"/>
    <property type="evidence" value="ECO:0000250"/>
    <property type="project" value="BHF-UCL"/>
</dbReference>
<dbReference type="GO" id="GO:0060347">
    <property type="term" value="P:heart trabecula formation"/>
    <property type="evidence" value="ECO:0007669"/>
    <property type="project" value="Ensembl"/>
</dbReference>
<dbReference type="GO" id="GO:0030097">
    <property type="term" value="P:hemopoiesis"/>
    <property type="evidence" value="ECO:0000250"/>
    <property type="project" value="BHF-UCL"/>
</dbReference>
<dbReference type="GO" id="GO:0043066">
    <property type="term" value="P:negative regulation of apoptotic process"/>
    <property type="evidence" value="ECO:0000250"/>
    <property type="project" value="BHF-UCL"/>
</dbReference>
<dbReference type="GO" id="GO:0090090">
    <property type="term" value="P:negative regulation of canonical Wnt signaling pathway"/>
    <property type="evidence" value="ECO:0000250"/>
    <property type="project" value="BHF-UCL"/>
</dbReference>
<dbReference type="GO" id="GO:0010667">
    <property type="term" value="P:negative regulation of cardiac muscle cell apoptotic process"/>
    <property type="evidence" value="ECO:0000315"/>
    <property type="project" value="BHF-UCL"/>
</dbReference>
<dbReference type="GO" id="GO:0045892">
    <property type="term" value="P:negative regulation of DNA-templated transcription"/>
    <property type="evidence" value="ECO:0000250"/>
    <property type="project" value="BHF-UCL"/>
</dbReference>
<dbReference type="GO" id="GO:1904036">
    <property type="term" value="P:negative regulation of epithelial cell apoptotic process"/>
    <property type="evidence" value="ECO:0007669"/>
    <property type="project" value="Ensembl"/>
</dbReference>
<dbReference type="GO" id="GO:0010832">
    <property type="term" value="P:negative regulation of myotube differentiation"/>
    <property type="evidence" value="ECO:0000315"/>
    <property type="project" value="BHF-UCL"/>
</dbReference>
<dbReference type="GO" id="GO:0000122">
    <property type="term" value="P:negative regulation of transcription by RNA polymerase II"/>
    <property type="evidence" value="ECO:0000315"/>
    <property type="project" value="BHF-UCL"/>
</dbReference>
<dbReference type="GO" id="GO:0003148">
    <property type="term" value="P:outflow tract septum morphogenesis"/>
    <property type="evidence" value="ECO:0000315"/>
    <property type="project" value="BHF-UCL"/>
</dbReference>
<dbReference type="GO" id="GO:0060037">
    <property type="term" value="P:pharyngeal system development"/>
    <property type="evidence" value="ECO:0000250"/>
    <property type="project" value="BHF-UCL"/>
</dbReference>
<dbReference type="GO" id="GO:0051891">
    <property type="term" value="P:positive regulation of cardioblast differentiation"/>
    <property type="evidence" value="ECO:0000250"/>
    <property type="project" value="BHF-UCL"/>
</dbReference>
<dbReference type="GO" id="GO:0008284">
    <property type="term" value="P:positive regulation of cell population proliferation"/>
    <property type="evidence" value="ECO:0000250"/>
    <property type="project" value="BHF-UCL"/>
</dbReference>
<dbReference type="GO" id="GO:0045893">
    <property type="term" value="P:positive regulation of DNA-templated transcription"/>
    <property type="evidence" value="ECO:0000314"/>
    <property type="project" value="UniProtKB"/>
</dbReference>
<dbReference type="GO" id="GO:0050679">
    <property type="term" value="P:positive regulation of epithelial cell proliferation"/>
    <property type="evidence" value="ECO:0007669"/>
    <property type="project" value="Ensembl"/>
</dbReference>
<dbReference type="GO" id="GO:0010628">
    <property type="term" value="P:positive regulation of gene expression"/>
    <property type="evidence" value="ECO:0007669"/>
    <property type="project" value="Ensembl"/>
</dbReference>
<dbReference type="GO" id="GO:0045823">
    <property type="term" value="P:positive regulation of heart contraction"/>
    <property type="evidence" value="ECO:0000250"/>
    <property type="project" value="BHF-UCL"/>
</dbReference>
<dbReference type="GO" id="GO:0045666">
    <property type="term" value="P:positive regulation of neuron differentiation"/>
    <property type="evidence" value="ECO:0000315"/>
    <property type="project" value="BHF-UCL"/>
</dbReference>
<dbReference type="GO" id="GO:0010765">
    <property type="term" value="P:positive regulation of sodium ion transport"/>
    <property type="evidence" value="ECO:0000250"/>
    <property type="project" value="BHF-UCL"/>
</dbReference>
<dbReference type="GO" id="GO:0045944">
    <property type="term" value="P:positive regulation of transcription by RNA polymerase II"/>
    <property type="evidence" value="ECO:0000314"/>
    <property type="project" value="BHF-UCL"/>
</dbReference>
<dbReference type="GO" id="GO:0060261">
    <property type="term" value="P:positive regulation of transcription initiation by RNA polymerase II"/>
    <property type="evidence" value="ECO:0000250"/>
    <property type="project" value="BHF-UCL"/>
</dbReference>
<dbReference type="GO" id="GO:0003342">
    <property type="term" value="P:proepicardium development"/>
    <property type="evidence" value="ECO:0007669"/>
    <property type="project" value="Ensembl"/>
</dbReference>
<dbReference type="GO" id="GO:0003350">
    <property type="term" value="P:pulmonary myocardium development"/>
    <property type="evidence" value="ECO:0007669"/>
    <property type="project" value="Ensembl"/>
</dbReference>
<dbReference type="GO" id="GO:0003168">
    <property type="term" value="P:Purkinje myocyte differentiation"/>
    <property type="evidence" value="ECO:0007669"/>
    <property type="project" value="Ensembl"/>
</dbReference>
<dbReference type="GO" id="GO:1903779">
    <property type="term" value="P:regulation of cardiac conduction"/>
    <property type="evidence" value="ECO:0000250"/>
    <property type="project" value="BHF-UCL"/>
</dbReference>
<dbReference type="GO" id="GO:0060043">
    <property type="term" value="P:regulation of cardiac muscle cell proliferation"/>
    <property type="evidence" value="ECO:0007669"/>
    <property type="project" value="Ensembl"/>
</dbReference>
<dbReference type="GO" id="GO:0055117">
    <property type="term" value="P:regulation of cardiac muscle contraction"/>
    <property type="evidence" value="ECO:0000250"/>
    <property type="project" value="BHF-UCL"/>
</dbReference>
<dbReference type="GO" id="GO:0006355">
    <property type="term" value="P:regulation of DNA-templated transcription"/>
    <property type="evidence" value="ECO:0000314"/>
    <property type="project" value="ComplexPortal"/>
</dbReference>
<dbReference type="GO" id="GO:0006357">
    <property type="term" value="P:regulation of transcription by RNA polymerase II"/>
    <property type="evidence" value="ECO:0000318"/>
    <property type="project" value="GO_Central"/>
</dbReference>
<dbReference type="GO" id="GO:0003221">
    <property type="term" value="P:right ventricular cardiac muscle tissue morphogenesis"/>
    <property type="evidence" value="ECO:0000315"/>
    <property type="project" value="BHF-UCL"/>
</dbReference>
<dbReference type="GO" id="GO:0003285">
    <property type="term" value="P:septum secundum development"/>
    <property type="evidence" value="ECO:0000315"/>
    <property type="project" value="BHF-UCL"/>
</dbReference>
<dbReference type="GO" id="GO:0048536">
    <property type="term" value="P:spleen development"/>
    <property type="evidence" value="ECO:0000315"/>
    <property type="project" value="UniProtKB"/>
</dbReference>
<dbReference type="GO" id="GO:0030878">
    <property type="term" value="P:thyroid gland development"/>
    <property type="evidence" value="ECO:0000315"/>
    <property type="project" value="BHF-UCL"/>
</dbReference>
<dbReference type="GO" id="GO:0006366">
    <property type="term" value="P:transcription by RNA polymerase II"/>
    <property type="evidence" value="ECO:0007669"/>
    <property type="project" value="Ensembl"/>
</dbReference>
<dbReference type="GO" id="GO:0001570">
    <property type="term" value="P:vasculogenesis"/>
    <property type="evidence" value="ECO:0000250"/>
    <property type="project" value="BHF-UCL"/>
</dbReference>
<dbReference type="GO" id="GO:0055015">
    <property type="term" value="P:ventricular cardiac muscle cell development"/>
    <property type="evidence" value="ECO:0000250"/>
    <property type="project" value="BHF-UCL"/>
</dbReference>
<dbReference type="GO" id="GO:0055005">
    <property type="term" value="P:ventricular cardiac myofibril assembly"/>
    <property type="evidence" value="ECO:0007669"/>
    <property type="project" value="Ensembl"/>
</dbReference>
<dbReference type="GO" id="GO:0060412">
    <property type="term" value="P:ventricular septum morphogenesis"/>
    <property type="evidence" value="ECO:0000315"/>
    <property type="project" value="BHF-UCL"/>
</dbReference>
<dbReference type="GO" id="GO:0003222">
    <property type="term" value="P:ventricular trabecula myocardium morphogenesis"/>
    <property type="evidence" value="ECO:0007669"/>
    <property type="project" value="Ensembl"/>
</dbReference>
<dbReference type="CDD" id="cd00086">
    <property type="entry name" value="homeodomain"/>
    <property type="match status" value="1"/>
</dbReference>
<dbReference type="FunFam" id="1.10.10.60:FF:000078">
    <property type="entry name" value="NK2 homeobox 3"/>
    <property type="match status" value="1"/>
</dbReference>
<dbReference type="Gene3D" id="1.10.10.60">
    <property type="entry name" value="Homeodomain-like"/>
    <property type="match status" value="1"/>
</dbReference>
<dbReference type="InterPro" id="IPR001356">
    <property type="entry name" value="HD"/>
</dbReference>
<dbReference type="InterPro" id="IPR020479">
    <property type="entry name" value="HD_metazoa"/>
</dbReference>
<dbReference type="InterPro" id="IPR017970">
    <property type="entry name" value="Homeobox_CS"/>
</dbReference>
<dbReference type="InterPro" id="IPR050394">
    <property type="entry name" value="Homeobox_NK-like"/>
</dbReference>
<dbReference type="InterPro" id="IPR009057">
    <property type="entry name" value="Homeodomain-like_sf"/>
</dbReference>
<dbReference type="PANTHER" id="PTHR24340">
    <property type="entry name" value="HOMEOBOX PROTEIN NKX"/>
    <property type="match status" value="1"/>
</dbReference>
<dbReference type="PANTHER" id="PTHR24340:SF28">
    <property type="entry name" value="HOMEOBOX PROTEIN NKX-2.5"/>
    <property type="match status" value="1"/>
</dbReference>
<dbReference type="Pfam" id="PF00046">
    <property type="entry name" value="Homeodomain"/>
    <property type="match status" value="1"/>
</dbReference>
<dbReference type="PRINTS" id="PR00024">
    <property type="entry name" value="HOMEOBOX"/>
</dbReference>
<dbReference type="SMART" id="SM00389">
    <property type="entry name" value="HOX"/>
    <property type="match status" value="1"/>
</dbReference>
<dbReference type="SUPFAM" id="SSF46689">
    <property type="entry name" value="Homeodomain-like"/>
    <property type="match status" value="1"/>
</dbReference>
<dbReference type="PROSITE" id="PS00027">
    <property type="entry name" value="HOMEOBOX_1"/>
    <property type="match status" value="1"/>
</dbReference>
<dbReference type="PROSITE" id="PS50071">
    <property type="entry name" value="HOMEOBOX_2"/>
    <property type="match status" value="1"/>
</dbReference>
<organism>
    <name type="scientific">Homo sapiens</name>
    <name type="common">Human</name>
    <dbReference type="NCBI Taxonomy" id="9606"/>
    <lineage>
        <taxon>Eukaryota</taxon>
        <taxon>Metazoa</taxon>
        <taxon>Chordata</taxon>
        <taxon>Craniata</taxon>
        <taxon>Vertebrata</taxon>
        <taxon>Euteleostomi</taxon>
        <taxon>Mammalia</taxon>
        <taxon>Eutheria</taxon>
        <taxon>Euarchontoglires</taxon>
        <taxon>Primates</taxon>
        <taxon>Haplorrhini</taxon>
        <taxon>Catarrhini</taxon>
        <taxon>Hominidae</taxon>
        <taxon>Homo</taxon>
    </lineage>
</organism>
<protein>
    <recommendedName>
        <fullName>Homeobox protein Nkx-2.5</fullName>
    </recommendedName>
    <alternativeName>
        <fullName>Cardiac-specific homeobox</fullName>
    </alternativeName>
    <alternativeName>
        <fullName>Homeobox protein CSX</fullName>
    </alternativeName>
    <alternativeName>
        <fullName>Homeobox protein NK-2 homolog E</fullName>
    </alternativeName>
</protein>
<name>NKX25_HUMAN</name>
<reference key="1">
    <citation type="journal article" date="1996" name="Mol. Med.">
        <title>Molecular cloning, chromosomal mapping, and characterization of the human cardiac-specific homeobox gene hCsx.</title>
        <authorList>
            <person name="Turbay D."/>
            <person name="Wechsler S.B."/>
            <person name="Blanchard K.M."/>
            <person name="Izumo S."/>
        </authorList>
    </citation>
    <scope>NUCLEOTIDE SEQUENCE [MRNA] (ISOFORM 1)</scope>
    <source>
        <tissue>Heart</tissue>
    </source>
</reference>
<reference key="2">
    <citation type="submission" date="1998-12" db="EMBL/GenBank/DDBJ databases">
        <title>Human Nkx-2.5 gene.</title>
        <authorList>
            <person name="Tate G."/>
            <person name="Mitsuya T."/>
        </authorList>
    </citation>
    <scope>NUCLEOTIDE SEQUENCE [MRNA] (ISOFORM 1)</scope>
    <source>
        <tissue>Fetal lung</tissue>
    </source>
</reference>
<reference key="3">
    <citation type="journal article" date="2004" name="Nat. Genet.">
        <title>Complete sequencing and characterization of 21,243 full-length human cDNAs.</title>
        <authorList>
            <person name="Ota T."/>
            <person name="Suzuki Y."/>
            <person name="Nishikawa T."/>
            <person name="Otsuki T."/>
            <person name="Sugiyama T."/>
            <person name="Irie R."/>
            <person name="Wakamatsu A."/>
            <person name="Hayashi K."/>
            <person name="Sato H."/>
            <person name="Nagai K."/>
            <person name="Kimura K."/>
            <person name="Makita H."/>
            <person name="Sekine M."/>
            <person name="Obayashi M."/>
            <person name="Nishi T."/>
            <person name="Shibahara T."/>
            <person name="Tanaka T."/>
            <person name="Ishii S."/>
            <person name="Yamamoto J."/>
            <person name="Saito K."/>
            <person name="Kawai Y."/>
            <person name="Isono Y."/>
            <person name="Nakamura Y."/>
            <person name="Nagahari K."/>
            <person name="Murakami K."/>
            <person name="Yasuda T."/>
            <person name="Iwayanagi T."/>
            <person name="Wagatsuma M."/>
            <person name="Shiratori A."/>
            <person name="Sudo H."/>
            <person name="Hosoiri T."/>
            <person name="Kaku Y."/>
            <person name="Kodaira H."/>
            <person name="Kondo H."/>
            <person name="Sugawara M."/>
            <person name="Takahashi M."/>
            <person name="Kanda K."/>
            <person name="Yokoi T."/>
            <person name="Furuya T."/>
            <person name="Kikkawa E."/>
            <person name="Omura Y."/>
            <person name="Abe K."/>
            <person name="Kamihara K."/>
            <person name="Katsuta N."/>
            <person name="Sato K."/>
            <person name="Tanikawa M."/>
            <person name="Yamazaki M."/>
            <person name="Ninomiya K."/>
            <person name="Ishibashi T."/>
            <person name="Yamashita H."/>
            <person name="Murakawa K."/>
            <person name="Fujimori K."/>
            <person name="Tanai H."/>
            <person name="Kimata M."/>
            <person name="Watanabe M."/>
            <person name="Hiraoka S."/>
            <person name="Chiba Y."/>
            <person name="Ishida S."/>
            <person name="Ono Y."/>
            <person name="Takiguchi S."/>
            <person name="Watanabe S."/>
            <person name="Yosida M."/>
            <person name="Hotuta T."/>
            <person name="Kusano J."/>
            <person name="Kanehori K."/>
            <person name="Takahashi-Fujii A."/>
            <person name="Hara H."/>
            <person name="Tanase T.-O."/>
            <person name="Nomura Y."/>
            <person name="Togiya S."/>
            <person name="Komai F."/>
            <person name="Hara R."/>
            <person name="Takeuchi K."/>
            <person name="Arita M."/>
            <person name="Imose N."/>
            <person name="Musashino K."/>
            <person name="Yuuki H."/>
            <person name="Oshima A."/>
            <person name="Sasaki N."/>
            <person name="Aotsuka S."/>
            <person name="Yoshikawa Y."/>
            <person name="Matsunawa H."/>
            <person name="Ichihara T."/>
            <person name="Shiohata N."/>
            <person name="Sano S."/>
            <person name="Moriya S."/>
            <person name="Momiyama H."/>
            <person name="Satoh N."/>
            <person name="Takami S."/>
            <person name="Terashima Y."/>
            <person name="Suzuki O."/>
            <person name="Nakagawa S."/>
            <person name="Senoh A."/>
            <person name="Mizoguchi H."/>
            <person name="Goto Y."/>
            <person name="Shimizu F."/>
            <person name="Wakebe H."/>
            <person name="Hishigaki H."/>
            <person name="Watanabe T."/>
            <person name="Sugiyama A."/>
            <person name="Takemoto M."/>
            <person name="Kawakami B."/>
            <person name="Yamazaki M."/>
            <person name="Watanabe K."/>
            <person name="Kumagai A."/>
            <person name="Itakura S."/>
            <person name="Fukuzumi Y."/>
            <person name="Fujimori Y."/>
            <person name="Komiyama M."/>
            <person name="Tashiro H."/>
            <person name="Tanigami A."/>
            <person name="Fujiwara T."/>
            <person name="Ono T."/>
            <person name="Yamada K."/>
            <person name="Fujii Y."/>
            <person name="Ozaki K."/>
            <person name="Hirao M."/>
            <person name="Ohmori Y."/>
            <person name="Kawabata A."/>
            <person name="Hikiji T."/>
            <person name="Kobatake N."/>
            <person name="Inagaki H."/>
            <person name="Ikema Y."/>
            <person name="Okamoto S."/>
            <person name="Okitani R."/>
            <person name="Kawakami T."/>
            <person name="Noguchi S."/>
            <person name="Itoh T."/>
            <person name="Shigeta K."/>
            <person name="Senba T."/>
            <person name="Matsumura K."/>
            <person name="Nakajima Y."/>
            <person name="Mizuno T."/>
            <person name="Morinaga M."/>
            <person name="Sasaki M."/>
            <person name="Togashi T."/>
            <person name="Oyama M."/>
            <person name="Hata H."/>
            <person name="Watanabe M."/>
            <person name="Komatsu T."/>
            <person name="Mizushima-Sugano J."/>
            <person name="Satoh T."/>
            <person name="Shirai Y."/>
            <person name="Takahashi Y."/>
            <person name="Nakagawa K."/>
            <person name="Okumura K."/>
            <person name="Nagase T."/>
            <person name="Nomura N."/>
            <person name="Kikuchi H."/>
            <person name="Masuho Y."/>
            <person name="Yamashita R."/>
            <person name="Nakai K."/>
            <person name="Yada T."/>
            <person name="Nakamura Y."/>
            <person name="Ohara O."/>
            <person name="Isogai T."/>
            <person name="Sugano S."/>
        </authorList>
    </citation>
    <scope>NUCLEOTIDE SEQUENCE [LARGE SCALE MRNA] (ISOFORMS 1; 2 AND 3)</scope>
    <scope>VARIANT ASP-74</scope>
    <source>
        <tissue>Heart</tissue>
    </source>
</reference>
<reference key="4">
    <citation type="journal article" date="2004" name="Nature">
        <title>The DNA sequence and comparative analysis of human chromosome 5.</title>
        <authorList>
            <person name="Schmutz J."/>
            <person name="Martin J."/>
            <person name="Terry A."/>
            <person name="Couronne O."/>
            <person name="Grimwood J."/>
            <person name="Lowry S."/>
            <person name="Gordon L.A."/>
            <person name="Scott D."/>
            <person name="Xie G."/>
            <person name="Huang W."/>
            <person name="Hellsten U."/>
            <person name="Tran-Gyamfi M."/>
            <person name="She X."/>
            <person name="Prabhakar S."/>
            <person name="Aerts A."/>
            <person name="Altherr M."/>
            <person name="Bajorek E."/>
            <person name="Black S."/>
            <person name="Branscomb E."/>
            <person name="Caoile C."/>
            <person name="Challacombe J.F."/>
            <person name="Chan Y.M."/>
            <person name="Denys M."/>
            <person name="Detter J.C."/>
            <person name="Escobar J."/>
            <person name="Flowers D."/>
            <person name="Fotopulos D."/>
            <person name="Glavina T."/>
            <person name="Gomez M."/>
            <person name="Gonzales E."/>
            <person name="Goodstein D."/>
            <person name="Grigoriev I."/>
            <person name="Groza M."/>
            <person name="Hammon N."/>
            <person name="Hawkins T."/>
            <person name="Haydu L."/>
            <person name="Israni S."/>
            <person name="Jett J."/>
            <person name="Kadner K."/>
            <person name="Kimball H."/>
            <person name="Kobayashi A."/>
            <person name="Lopez F."/>
            <person name="Lou Y."/>
            <person name="Martinez D."/>
            <person name="Medina C."/>
            <person name="Morgan J."/>
            <person name="Nandkeshwar R."/>
            <person name="Noonan J.P."/>
            <person name="Pitluck S."/>
            <person name="Pollard M."/>
            <person name="Predki P."/>
            <person name="Priest J."/>
            <person name="Ramirez L."/>
            <person name="Retterer J."/>
            <person name="Rodriguez A."/>
            <person name="Rogers S."/>
            <person name="Salamov A."/>
            <person name="Salazar A."/>
            <person name="Thayer N."/>
            <person name="Tice H."/>
            <person name="Tsai M."/>
            <person name="Ustaszewska A."/>
            <person name="Vo N."/>
            <person name="Wheeler J."/>
            <person name="Wu K."/>
            <person name="Yang J."/>
            <person name="Dickson M."/>
            <person name="Cheng J.-F."/>
            <person name="Eichler E.E."/>
            <person name="Olsen A."/>
            <person name="Pennacchio L.A."/>
            <person name="Rokhsar D.S."/>
            <person name="Richardson P."/>
            <person name="Lucas S.M."/>
            <person name="Myers R.M."/>
            <person name="Rubin E.M."/>
        </authorList>
    </citation>
    <scope>NUCLEOTIDE SEQUENCE [LARGE SCALE GENOMIC DNA]</scope>
</reference>
<reference key="5">
    <citation type="submission" date="2005-09" db="EMBL/GenBank/DDBJ databases">
        <authorList>
            <person name="Mural R.J."/>
            <person name="Istrail S."/>
            <person name="Sutton G.G."/>
            <person name="Florea L."/>
            <person name="Halpern A.L."/>
            <person name="Mobarry C.M."/>
            <person name="Lippert R."/>
            <person name="Walenz B."/>
            <person name="Shatkay H."/>
            <person name="Dew I."/>
            <person name="Miller J.R."/>
            <person name="Flanigan M.J."/>
            <person name="Edwards N.J."/>
            <person name="Bolanos R."/>
            <person name="Fasulo D."/>
            <person name="Halldorsson B.V."/>
            <person name="Hannenhalli S."/>
            <person name="Turner R."/>
            <person name="Yooseph S."/>
            <person name="Lu F."/>
            <person name="Nusskern D.R."/>
            <person name="Shue B.C."/>
            <person name="Zheng X.H."/>
            <person name="Zhong F."/>
            <person name="Delcher A.L."/>
            <person name="Huson D.H."/>
            <person name="Kravitz S.A."/>
            <person name="Mouchard L."/>
            <person name="Reinert K."/>
            <person name="Remington K.A."/>
            <person name="Clark A.G."/>
            <person name="Waterman M.S."/>
            <person name="Eichler E.E."/>
            <person name="Adams M.D."/>
            <person name="Hunkapiller M.W."/>
            <person name="Myers E.W."/>
            <person name="Venter J.C."/>
        </authorList>
    </citation>
    <scope>NUCLEOTIDE SEQUENCE [LARGE SCALE GENOMIC DNA]</scope>
</reference>
<reference key="6">
    <citation type="journal article" date="2004" name="Genome Res.">
        <title>The status, quality, and expansion of the NIH full-length cDNA project: the Mammalian Gene Collection (MGC).</title>
        <authorList>
            <consortium name="The MGC Project Team"/>
        </authorList>
    </citation>
    <scope>NUCLEOTIDE SEQUENCE [LARGE SCALE MRNA] (ISOFORM 1)</scope>
    <source>
        <tissue>Pancreas</tissue>
        <tissue>Spleen</tissue>
    </source>
</reference>
<reference key="7">
    <citation type="journal article" date="2011" name="Circulation">
        <title>Formation of the building plan of the human heart: morphogenesis, growth, and differentiation.</title>
        <authorList>
            <person name="Sizarov A."/>
            <person name="Ya J."/>
            <person name="de Boer B.A."/>
            <person name="Lamers W.H."/>
            <person name="Christoffels V.M."/>
            <person name="Moorman A.F."/>
        </authorList>
    </citation>
    <scope>DEVELOPMENTAL STAGE</scope>
</reference>
<reference key="8">
    <citation type="journal article" date="2012" name="Dev. Cell">
        <title>Congenital asplenia in mice and humans with mutations in a Pbx/Nkx2-5/p15 module.</title>
        <authorList>
            <person name="Koss M."/>
            <person name="Bolze A."/>
            <person name="Brendolan A."/>
            <person name="Saggese M."/>
            <person name="Capellini T.D."/>
            <person name="Bojilova E."/>
            <person name="Boisson B."/>
            <person name="Prall O.W."/>
            <person name="Elliott D.A."/>
            <person name="Solloway M."/>
            <person name="Lenti E."/>
            <person name="Hidaka C."/>
            <person name="Chang C.P."/>
            <person name="Mahlaoui N."/>
            <person name="Harvey R.P."/>
            <person name="Casanova J.L."/>
            <person name="Selleri L."/>
        </authorList>
    </citation>
    <scope>FUNCTION</scope>
    <scope>VARIANT HIS-236</scope>
    <scope>CHARACTERIZATION OF VARIANT HIS-236</scope>
</reference>
<reference key="9">
    <citation type="journal article" date="2018" name="Sci. Transl. Med.">
        <title>NEDD9 targets COL3A1 to promote endothelial fibrosis and pulmonary arterial hypertension.</title>
        <authorList>
            <person name="Samokhin A.O."/>
            <person name="Stephens T."/>
            <person name="Wertheim B.M."/>
            <person name="Wang R.S."/>
            <person name="Vargas S.O."/>
            <person name="Yung L.M."/>
            <person name="Cao M."/>
            <person name="Brown M."/>
            <person name="Arons E."/>
            <person name="Dieffenbach P.B."/>
            <person name="Fewell J.G."/>
            <person name="Matar M."/>
            <person name="Bowman F.P."/>
            <person name="Haley K.J."/>
            <person name="Alba G.A."/>
            <person name="Marino S.M."/>
            <person name="Kumar R."/>
            <person name="Rosas I.O."/>
            <person name="Waxman A.B."/>
            <person name="Oldham W.M."/>
            <person name="Khanna D."/>
            <person name="Graham B.B."/>
            <person name="Seo S."/>
            <person name="Gladyshev V.N."/>
            <person name="Yu P.B."/>
            <person name="Fredenburgh L.E."/>
            <person name="Loscalzo J."/>
            <person name="Leopold J.A."/>
            <person name="Maron B.A."/>
        </authorList>
    </citation>
    <scope>FUNCTION</scope>
    <scope>INTERACTION WITH NEDD9</scope>
    <scope>SUBCELLULAR LOCATION</scope>
</reference>
<reference key="10">
    <citation type="journal article" date="2012" name="Biochemistry">
        <title>Crystal structure of the human NKX2.5 homeodomain in complex with DNA target.</title>
        <authorList>
            <person name="Pradhan L."/>
            <person name="Genis C."/>
            <person name="Scone P."/>
            <person name="Weinberg E.O."/>
            <person name="Kasahara H."/>
            <person name="Nam H.J."/>
        </authorList>
    </citation>
    <scope>X-RAY CRYSTALLOGRAPHY (1.70 ANGSTROMS) OF 138-194 OF MUTANT SER-193 OF HOMODIMER IN COMPLEX WITH DNA</scope>
    <scope>SUBUNIT</scope>
    <scope>DNA-BINDING</scope>
</reference>
<reference key="11">
    <citation type="journal article" date="2016" name="Biochemistry">
        <title>Intermolecular interactions of cardiac transcription factors NKX2.5 and TBX5.</title>
        <authorList>
            <person name="Pradhan L."/>
            <person name="Gopal S."/>
            <person name="Li S."/>
            <person name="Ashur S."/>
            <person name="Suryanarayanan S."/>
            <person name="Kasahara H."/>
            <person name="Nam H.J."/>
        </authorList>
    </citation>
    <scope>X-RAY CRYSTALLOGRAPHY (2.82 ANGSTROMS) OF 142-194 IN COMPLEX WITH TBX5 AND DNA</scope>
    <scope>INTERACTION WITH TBX5</scope>
    <scope>DNA-BINDING</scope>
</reference>
<reference key="12">
    <citation type="journal article" date="1998" name="Science">
        <title>Congenital heart disease caused by mutations in the transcription factor NKX2-5.</title>
        <authorList>
            <person name="Schott J.-J."/>
            <person name="Benson D.W."/>
            <person name="Basson C.T."/>
            <person name="Pease W."/>
            <person name="Silberbach G.M."/>
            <person name="Moak J.P."/>
            <person name="Maron B.J."/>
            <person name="Seidman C.E."/>
            <person name="Seidman J.G."/>
        </authorList>
    </citation>
    <scope>VARIANT ASD7 MET-178</scope>
</reference>
<reference key="13">
    <citation type="journal article" date="1999" name="J. Clin. Invest.">
        <title>Mutations in the cardiac transcription factor NKX2.5 affect diverse cardiac developmental pathways.</title>
        <authorList>
            <person name="Benson D.W."/>
            <person name="Silberbach G.M."/>
            <person name="Kavanaugh-McHugh A."/>
            <person name="Cottrill C."/>
            <person name="Zhang Y."/>
            <person name="Riggs S."/>
            <person name="Smalls O."/>
            <person name="Johnson M.C."/>
            <person name="Watson M.S."/>
            <person name="Seidman J.G."/>
            <person name="Seidman C.E."/>
            <person name="Plowden J."/>
            <person name="Kugler J.D."/>
        </authorList>
    </citation>
    <scope>VARIANT TOF CYS-25</scope>
    <scope>VARIANTS ASD7 LYS-188; GLY-189 AND CYS-191</scope>
</reference>
<reference key="14">
    <citation type="journal article" date="2001" name="Circulation">
        <title>NKX2.5 mutations in patients with tetralogy of fallot.</title>
        <authorList>
            <person name="Goldmuntz E."/>
            <person name="Geiger E."/>
            <person name="Benson D.W."/>
        </authorList>
    </citation>
    <scope>VARIANTS TOF GLN-21; CYS-25; CYS-216 AND VAL-219</scope>
</reference>
<reference key="15">
    <citation type="journal article" date="2003" name="J. Am. Coll. Cardiol.">
        <title>NKX2.5 mutations in patients with congenital heart disease.</title>
        <authorList>
            <person name="McElhinney D.B."/>
            <person name="Geiger E."/>
            <person name="Blinder J."/>
            <person name="Benson D.W."/>
            <person name="Goldmuntz E."/>
        </authorList>
    </citation>
    <scope>VARIANTS ASD7 ILE-15; VAL-63; GLU-127 AND THR-275</scope>
    <scope>VARIANTS TOF GLN-21; PRO-22; CYS-25; CYS-216; VAL-219 AND THR-323</scope>
    <scope>VARIANT CTHM ASN-291 DEL</scope>
    <scope>VARIANT HLHS2 CYS-25</scope>
    <scope>INVOLVEMENT IN CONGENITAL HEART MALFORMATIONS</scope>
</reference>
<reference key="16">
    <citation type="journal article" date="2004" name="J. Med. Genet.">
        <title>Somatic NKX2-5 mutations as a novel mechanism of disease in complex congenital heart disease.</title>
        <authorList>
            <person name="Reamon-Buettner S.M."/>
            <person name="Borlak J."/>
        </authorList>
    </citation>
    <scope>VARIANTS ASD7 PRO-7; SER-19; CYS-25; PRO-45; LEU-51; PRO-69; LEU-77; SER-114; ARG-114; ARG-118; ARG-124; VAL-126; SER-133; THR-135; PRO-144; MET-178; GLU-183; THR-192; ARG-192; ARG-194; GLU-205; VAL-219; ASN-226; HIS-248; PRO-279; PHE-279; VAL-281; VAL-286; HIS-294; GLY-299; GLY-305; SER-320 AND GLN-322</scope>
</reference>
<reference key="17">
    <citation type="journal article" date="2005" name="Am. J. Med. Genet. A">
        <title>Phenotypes with GATA4 or NKX2.5 mutations in familial atrial septal defect.</title>
        <authorList>
            <person name="Hirayama-Yamada K."/>
            <person name="Kamisago M."/>
            <person name="Akimoto K."/>
            <person name="Aotsuka H."/>
            <person name="Nakamura Y."/>
            <person name="Tomita H."/>
            <person name="Furutani M."/>
            <person name="Imamura S."/>
            <person name="Takao A."/>
            <person name="Nakazawa M."/>
            <person name="Matsuoka R."/>
        </authorList>
    </citation>
    <scope>VARIANTS ASD7 ILE-15; GLN-21; PRO-22; CYS-25; VAL-63; GLU-127; CYS-142; MET-178; HIS-187; LYS-188; GLY-189; CYS-190; CYS-191; CYS-216; VAL-219; THR-275 AND THR-323</scope>
    <scope>VARIANT HLHS2 CYS-25</scope>
</reference>
<reference key="18">
    <citation type="journal article" date="2006" name="J. Clin. Endocrinol. Metab.">
        <title>Missense mutation in the transcription factor NKX2-5: a novel molecular event in the pathogenesis of thyroid dysgenesis.</title>
        <authorList>
            <person name="Dentice M."/>
            <person name="Cordeddu V."/>
            <person name="Rosica A."/>
            <person name="Ferrara A.M."/>
            <person name="Santarpia L."/>
            <person name="Salvatore D."/>
            <person name="Chiovato L."/>
            <person name="Perri A."/>
            <person name="Moschini L."/>
            <person name="Fazzini C."/>
            <person name="Olivieri A."/>
            <person name="Costa P."/>
            <person name="Stoppioni V."/>
            <person name="Baserga M."/>
            <person name="De Felice M."/>
            <person name="Sorcini M."/>
            <person name="Fenzi G."/>
            <person name="Di Lauro R."/>
            <person name="Tartaglia M."/>
            <person name="Macchia P.E."/>
        </authorList>
    </citation>
    <scope>VARIANTS CHNG5 CYS-25; SER-119 AND PRO-161</scope>
    <scope>CHARACTERIZATION OF VARIANTS CHNG5 CYS-25; SER-119 AND PRO-161</scope>
</reference>
<reference key="19">
    <citation type="journal article" date="2008" name="Pediatr. Cardiol.">
        <title>The effect of p.Arg25Cys alteration in NKX2-5 on conotruncal heart anomalies: mutation or polymorphism?</title>
        <authorList>
            <person name="Akcaboy M.I."/>
            <person name="Cengiz F.B."/>
            <person name="Inceoglu B."/>
            <person name="Ucar T."/>
            <person name="Atalay S."/>
            <person name="Tutar E."/>
            <person name="Tekin M."/>
        </authorList>
    </citation>
    <scope>VARIANT CTHM CYS-25</scope>
</reference>
<reference key="20">
    <citation type="journal article" date="2010" name="Genetica">
        <title>Mutations of the GATA4 and NKX2.5 genes in Chinese pediatric patients with non-familial congenital heart disease.</title>
        <authorList>
            <person name="Peng T."/>
            <person name="Wang L."/>
            <person name="Zhou S.F."/>
            <person name="Li X."/>
        </authorList>
    </citation>
    <scope>VARIANT VSD3 GLN-283</scope>
</reference>
<reference key="21">
    <citation type="journal article" date="2010" name="J. Med. Genet.">
        <title>Comprehensive genotype-phenotype analysis in 230 patients with tetralogy of Fallot.</title>
        <authorList>
            <person name="Rauch R."/>
            <person name="Hofbeck M."/>
            <person name="Zweier C."/>
            <person name="Koch A."/>
            <person name="Zink S."/>
            <person name="Trautmann U."/>
            <person name="Hoyer J."/>
            <person name="Kaulitz R."/>
            <person name="Singer H."/>
            <person name="Rauch A."/>
        </authorList>
    </citation>
    <scope>VARIANT TOF CYS-25</scope>
</reference>
<reference key="22">
    <citation type="journal article" date="2011" name="Int. J. Mol. Med.">
        <title>A novel NKX2-5 mutation in familial ventricular septal defect.</title>
        <authorList>
            <person name="Wang J."/>
            <person name="Xin Y.F."/>
            <person name="Liu X.Y."/>
            <person name="Liu Z.M."/>
            <person name="Wang X.Z."/>
            <person name="Yang Y.Q."/>
        </authorList>
    </citation>
    <scope>VARIANT VSD3 ALA-59</scope>
    <scope>CHARACTERIZATION OF VARIANT VSD3 ALA-59</scope>
</reference>
<proteinExistence type="evidence at protein level"/>
<feature type="chain" id="PRO_0000048937" description="Homeobox protein Nkx-2.5">
    <location>
        <begin position="1"/>
        <end position="324"/>
    </location>
</feature>
<feature type="DNA-binding region" description="Homeobox" evidence="2 16 17">
    <location>
        <begin position="138"/>
        <end position="197"/>
    </location>
</feature>
<feature type="splice variant" id="VSP_043492" description="In isoform 2." evidence="20">
    <original>ELCALQKAVELEKTEADNAERPRARRRRKPRVLFSQAQVY</original>
    <variation>GCELPRGQRPPVLFSSALSQPDFLQMLSETCRWLPVHLAE</variation>
    <location>
        <begin position="112"/>
        <end position="151"/>
    </location>
</feature>
<feature type="splice variant" id="VSP_045481" description="In isoform 3." evidence="20">
    <original>E</original>
    <variation>A</variation>
    <location>
        <position position="112"/>
    </location>
</feature>
<feature type="splice variant" id="VSP_045482" description="In isoform 3." evidence="20">
    <location>
        <begin position="113"/>
        <end position="324"/>
    </location>
</feature>
<feature type="splice variant" id="VSP_043493" description="In isoform 2." evidence="20">
    <location>
        <begin position="152"/>
        <end position="324"/>
    </location>
</feature>
<feature type="sequence variant" id="VAR_038212" description="In ASD7; somatic mutation." evidence="7">
    <original>L</original>
    <variation>P</variation>
    <location>
        <position position="7"/>
    </location>
</feature>
<feature type="sequence variant" id="VAR_038213" description="In ASD7; dbSNP:rs387906773." evidence="5 8">
    <original>K</original>
    <variation>I</variation>
    <location>
        <position position="15"/>
    </location>
</feature>
<feature type="sequence variant" id="VAR_049581" description="In dbSNP:rs17052019.">
    <original>D</original>
    <variation>A</variation>
    <location>
        <position position="16"/>
    </location>
</feature>
<feature type="sequence variant" id="VAR_038214" description="In ASD7; somatic mutation." evidence="7">
    <original>N</original>
    <variation>S</variation>
    <location>
        <position position="19"/>
    </location>
</feature>
<feature type="sequence variant" id="VAR_038215" description="In TOF and ASD7; dbSNP:rs104893904." evidence="4 5 8">
    <original>E</original>
    <variation>Q</variation>
    <location>
        <position position="21"/>
    </location>
</feature>
<feature type="sequence variant" id="VAR_038216" description="In ASD7 and TOF; dbSNP:rs201442000." evidence="5 8">
    <original>Q</original>
    <variation>P</variation>
    <location>
        <position position="22"/>
    </location>
</feature>
<feature type="sequence variant" id="VAR_010116" description="In ASD7, TOF, CHNG5, HLHS2 and CTHM; uncertain significance; exhibits significant functional impairment with reduction of transactivation properties and dominant-negative effect; the mutant protein activity on the DIO2, TG and TPO promoters is significantly impaired; dbSNP:rs28936670." evidence="3 4 5 7 8 9 10 11">
    <original>R</original>
    <variation>C</variation>
    <location>
        <position position="25"/>
    </location>
</feature>
<feature type="sequence variant" id="VAR_038217" description="In ASD7; somatic mutation; dbSNP:rs779548360." evidence="7">
    <original>S</original>
    <variation>P</variation>
    <location>
        <position position="45"/>
    </location>
</feature>
<feature type="sequence variant" id="VAR_038218" description="In ASD7; somatic mutation; dbSNP:rs753937287." evidence="7">
    <original>F</original>
    <variation>L</variation>
    <location>
        <position position="51"/>
    </location>
</feature>
<feature type="sequence variant" id="VAR_067586" description="In VSD3; significantly reduced activation of NPPA gene compared to wild-type; dbSNP:rs387906775." evidence="13">
    <original>P</original>
    <variation>A</variation>
    <location>
        <position position="59"/>
    </location>
</feature>
<feature type="sequence variant" id="VAR_038219" description="In ASD7; dbSNP:rs530270916." evidence="5 8">
    <original>A</original>
    <variation>V</variation>
    <location>
        <position position="63"/>
    </location>
</feature>
<feature type="sequence variant" id="VAR_038220" description="In ASD7; somatic mutation." evidence="7">
    <original>L</original>
    <variation>P</variation>
    <location>
        <position position="69"/>
    </location>
</feature>
<feature type="sequence variant" id="VAR_069058" description="In dbSNP:rs201362118." evidence="6">
    <original>G</original>
    <variation>D</variation>
    <location>
        <position position="74"/>
    </location>
</feature>
<feature type="sequence variant" id="VAR_038221" description="In ASD7; somatic mutation." evidence="7">
    <original>P</original>
    <variation>L</variation>
    <location>
        <position position="77"/>
    </location>
</feature>
<feature type="sequence variant" id="VAR_038222" description="In ASD7; somatic mutation." evidence="7">
    <original>C</original>
    <variation>R</variation>
    <location>
        <position position="114"/>
    </location>
</feature>
<feature type="sequence variant" id="VAR_038223" description="In ASD7; somatic mutation." evidence="7">
    <original>C</original>
    <variation>S</variation>
    <location>
        <position position="114"/>
    </location>
</feature>
<feature type="sequence variant" id="VAR_038224" description="In ASD7; somatic mutation." evidence="7">
    <original>K</original>
    <variation>R</variation>
    <location>
        <position position="118"/>
    </location>
</feature>
<feature type="sequence variant" id="VAR_047869" description="In CHNG5; exhibits a significant functional impairment with reduction of transactivation properties and dominant-negative effect which was associated with reduced DNA binding; dbSNP:rs137852684." evidence="9">
    <original>A</original>
    <variation>S</variation>
    <location>
        <position position="119"/>
    </location>
</feature>
<feature type="sequence variant" id="VAR_038225" description="In ASD7; somatic mutation." evidence="7">
    <original>K</original>
    <variation>R</variation>
    <location>
        <position position="124"/>
    </location>
</feature>
<feature type="sequence variant" id="VAR_038226" description="In ASD7; somatic mutation." evidence="7">
    <original>E</original>
    <variation>V</variation>
    <location>
        <position position="126"/>
    </location>
</feature>
<feature type="sequence variant" id="VAR_038227" description="In ASD7; dbSNP:rs387906774." evidence="5 8">
    <original>A</original>
    <variation>E</variation>
    <location>
        <position position="127"/>
    </location>
</feature>
<feature type="sequence variant" id="VAR_038228" description="In ASD7; somatic mutation; dbSNP:rs1184594159." evidence="7">
    <original>P</original>
    <variation>S</variation>
    <location>
        <position position="133"/>
    </location>
</feature>
<feature type="sequence variant" id="VAR_038229" description="In ASD7; somatic mutation; dbSNP:rs1761363121." evidence="7">
    <original>A</original>
    <variation>T</variation>
    <location>
        <position position="135"/>
    </location>
</feature>
<feature type="sequence variant" id="VAR_038230" description="In ASD7." evidence="8">
    <original>R</original>
    <variation>C</variation>
    <location>
        <position position="142"/>
    </location>
</feature>
<feature type="sequence variant" id="VAR_038231" description="In ASD7; somatic mutation; dbSNP:rs747932354." evidence="7">
    <original>L</original>
    <variation>P</variation>
    <location>
        <position position="144"/>
    </location>
</feature>
<feature type="sequence variant" id="VAR_047870" description="In CHNG5; exhibits a significant functional impairment with reduction of transactivation properties and dominant-negative effect which was associated with reduced DNA binding; dbSNP:rs137852685." evidence="9">
    <original>R</original>
    <variation>P</variation>
    <location>
        <position position="161"/>
    </location>
</feature>
<feature type="sequence variant" id="VAR_003752" description="In ASD7; dbSNP:rs104893900." evidence="7 8 19">
    <original>T</original>
    <variation>M</variation>
    <location>
        <position position="178"/>
    </location>
</feature>
<feature type="sequence variant" id="VAR_038232" description="In ASD7; somatic mutation; dbSNP:rs137852686." evidence="7">
    <original>K</original>
    <variation>E</variation>
    <location>
        <position position="183"/>
    </location>
</feature>
<feature type="sequence variant" id="VAR_038233" description="In ASD7." evidence="8">
    <original>Q</original>
    <variation>H</variation>
    <location>
        <position position="187"/>
    </location>
</feature>
<feature type="sequence variant" id="VAR_010117" description="In ASD7." evidence="3 8">
    <original>N</original>
    <variation>K</variation>
    <location>
        <position position="188"/>
    </location>
</feature>
<feature type="sequence variant" id="VAR_010118" description="In ASD7." evidence="3 8">
    <original>R</original>
    <variation>G</variation>
    <location>
        <position position="189"/>
    </location>
</feature>
<feature type="sequence variant" id="VAR_038234" description="In ASD7; dbSNP:rs104893906." evidence="8">
    <original>R</original>
    <variation>C</variation>
    <location>
        <position position="190"/>
    </location>
</feature>
<feature type="sequence variant" id="VAR_010119" description="In ASD7." evidence="3 8">
    <original>Y</original>
    <variation>C</variation>
    <location>
        <position position="191"/>
    </location>
</feature>
<feature type="sequence variant" id="VAR_038235" description="In ASD7; somatic mutation." evidence="7">
    <original>K</original>
    <variation>R</variation>
    <location>
        <position position="192"/>
    </location>
</feature>
<feature type="sequence variant" id="VAR_038236" description="In ASD7; somatic mutation." evidence="7">
    <original>K</original>
    <variation>T</variation>
    <location>
        <position position="192"/>
    </location>
</feature>
<feature type="sequence variant" id="VAR_038237" description="In ASD7; somatic mutation." evidence="7">
    <original>K</original>
    <variation>R</variation>
    <location>
        <position position="194"/>
    </location>
</feature>
<feature type="sequence variant" id="VAR_038238" description="In ASD7; somatic mutation." evidence="7">
    <original>V</original>
    <variation>E</variation>
    <location>
        <position position="205"/>
    </location>
</feature>
<feature type="sequence variant" id="VAR_038239" description="In TOF and ASD7; dbSNP:rs104893905." evidence="4 5 8">
    <original>R</original>
    <variation>C</variation>
    <location>
        <position position="216"/>
    </location>
</feature>
<feature type="sequence variant" id="VAR_038240" description="In ASD7 and TOF; somatic mutation; dbSNP:rs104893902." evidence="4 5 7 8">
    <original>A</original>
    <variation>V</variation>
    <location>
        <position position="219"/>
    </location>
</feature>
<feature type="sequence variant" id="VAR_038241" description="In ASD7; somatic mutation; dbSNP:rs760528062." evidence="7">
    <original>D</original>
    <variation>N</variation>
    <location>
        <position position="226"/>
    </location>
</feature>
<feature type="sequence variant" id="VAR_069590" description="Found in patients with isolated congenital asplenia; uncertain significance; does not affect DNA binding; impairs transactivation activity; dbSNP:rs397515399." evidence="15">
    <original>P</original>
    <variation>H</variation>
    <location>
        <position position="236"/>
    </location>
</feature>
<feature type="sequence variant" id="VAR_038242" description="In ASD7; somatic mutation." evidence="7">
    <original>Y</original>
    <variation>H</variation>
    <location>
        <position position="248"/>
    </location>
</feature>
<feature type="sequence variant" id="VAR_038243" description="In ASD7; dbSNP:rs368366482." evidence="5 8">
    <original>P</original>
    <variation>T</variation>
    <location>
        <position position="275"/>
    </location>
</feature>
<feature type="sequence variant" id="VAR_038244" description="In ASD7; somatic mutation; dbSNP:rs1223599871." evidence="7">
    <original>S</original>
    <variation>F</variation>
    <location>
        <position position="279"/>
    </location>
</feature>
<feature type="sequence variant" id="VAR_038245" description="In ASD7; somatic mutation." evidence="7">
    <original>S</original>
    <variation>P</variation>
    <location>
        <position position="279"/>
    </location>
</feature>
<feature type="sequence variant" id="VAR_038246" description="In ASD7; somatic mutation." evidence="7">
    <original>A</original>
    <variation>V</variation>
    <location>
        <position position="281"/>
    </location>
</feature>
<feature type="sequence variant" id="VAR_067587" description="In VSD3; dbSNP:rs375086983." evidence="12">
    <original>P</original>
    <variation>Q</variation>
    <location>
        <position position="283"/>
    </location>
</feature>
<feature type="sequence variant" id="VAR_038247" description="In ASD7; somatic mutation." evidence="7">
    <original>A</original>
    <variation>V</variation>
    <location>
        <position position="286"/>
    </location>
</feature>
<feature type="sequence variant" id="VAR_067588" description="In CTHM; dbSNP:rs756974215." evidence="5">
    <location>
        <position position="291"/>
    </location>
</feature>
<feature type="sequence variant" id="VAR_038248" description="In ASD7; somatic mutation." evidence="7">
    <original>N</original>
    <variation>H</variation>
    <location>
        <position position="294"/>
    </location>
</feature>
<feature type="sequence variant" id="VAR_038249" description="In ASD7; somatic mutation; dbSNP:rs137852683." evidence="7">
    <original>D</original>
    <variation>G</variation>
    <location>
        <position position="299"/>
    </location>
</feature>
<feature type="sequence variant" id="VAR_038250" description="In ASD7; somatic mutation." evidence="7">
    <original>S</original>
    <variation>G</variation>
    <location>
        <position position="305"/>
    </location>
</feature>
<feature type="sequence variant" id="VAR_038251" description="In ASD7; somatic mutation; dbSNP:rs1761339592." evidence="7">
    <original>G</original>
    <variation>S</variation>
    <location>
        <position position="320"/>
    </location>
</feature>
<feature type="sequence variant" id="VAR_038252" description="In ASD7; somatic mutation." evidence="7">
    <original>R</original>
    <variation>Q</variation>
    <location>
        <position position="322"/>
    </location>
</feature>
<feature type="sequence variant" id="VAR_038253" description="In ASD7 and TOF." evidence="5 8">
    <original>A</original>
    <variation>T</variation>
    <location>
        <position position="323"/>
    </location>
</feature>
<feature type="helix" evidence="22">
    <location>
        <begin position="147"/>
        <end position="157"/>
    </location>
</feature>
<feature type="helix" evidence="22">
    <location>
        <begin position="165"/>
        <end position="175"/>
    </location>
</feature>
<feature type="helix" evidence="22">
    <location>
        <begin position="179"/>
        <end position="193"/>
    </location>
</feature>
<accession>P52952</accession>
<accession>A8K3K0</accession>
<accession>B4DNB6</accession>
<accession>E9PBU6</accession>
<keyword id="KW-0002">3D-structure</keyword>
<keyword id="KW-0025">Alternative splicing</keyword>
<keyword id="KW-0976">Atrial septal defect</keyword>
<keyword id="KW-0984">Congenital hypothyroidism</keyword>
<keyword id="KW-0217">Developmental protein</keyword>
<keyword id="KW-0225">Disease variant</keyword>
<keyword id="KW-0238">DNA-binding</keyword>
<keyword id="KW-0371">Homeobox</keyword>
<keyword id="KW-0539">Nucleus</keyword>
<keyword id="KW-1267">Proteomics identification</keyword>
<keyword id="KW-1185">Reference proteome</keyword>